<feature type="chain" id="PRO_1000096714" description="N-acetyl-gamma-glutamyl-phosphate reductase">
    <location>
        <begin position="1"/>
        <end position="345"/>
    </location>
</feature>
<feature type="active site" evidence="1">
    <location>
        <position position="149"/>
    </location>
</feature>
<gene>
    <name evidence="1" type="primary">argC</name>
    <name type="ordered locus">BcerKBAB4_3965</name>
</gene>
<comment type="function">
    <text evidence="1">Catalyzes the NADPH-dependent reduction of N-acetyl-5-glutamyl phosphate to yield N-acetyl-L-glutamate 5-semialdehyde.</text>
</comment>
<comment type="catalytic activity">
    <reaction evidence="1">
        <text>N-acetyl-L-glutamate 5-semialdehyde + phosphate + NADP(+) = N-acetyl-L-glutamyl 5-phosphate + NADPH + H(+)</text>
        <dbReference type="Rhea" id="RHEA:21588"/>
        <dbReference type="ChEBI" id="CHEBI:15378"/>
        <dbReference type="ChEBI" id="CHEBI:29123"/>
        <dbReference type="ChEBI" id="CHEBI:43474"/>
        <dbReference type="ChEBI" id="CHEBI:57783"/>
        <dbReference type="ChEBI" id="CHEBI:57936"/>
        <dbReference type="ChEBI" id="CHEBI:58349"/>
        <dbReference type="EC" id="1.2.1.38"/>
    </reaction>
</comment>
<comment type="pathway">
    <text evidence="1">Amino-acid biosynthesis; L-arginine biosynthesis; N(2)-acetyl-L-ornithine from L-glutamate: step 3/4.</text>
</comment>
<comment type="subcellular location">
    <subcellularLocation>
        <location evidence="1">Cytoplasm</location>
    </subcellularLocation>
</comment>
<comment type="similarity">
    <text evidence="1">Belongs to the NAGSA dehydrogenase family. Type 1 subfamily.</text>
</comment>
<protein>
    <recommendedName>
        <fullName evidence="1">N-acetyl-gamma-glutamyl-phosphate reductase</fullName>
        <shortName evidence="1">AGPR</shortName>
        <ecNumber evidence="1">1.2.1.38</ecNumber>
    </recommendedName>
    <alternativeName>
        <fullName evidence="1">N-acetyl-glutamate semialdehyde dehydrogenase</fullName>
        <shortName evidence="1">NAGSA dehydrogenase</shortName>
    </alternativeName>
</protein>
<evidence type="ECO:0000255" key="1">
    <source>
        <dbReference type="HAMAP-Rule" id="MF_00150"/>
    </source>
</evidence>
<keyword id="KW-0028">Amino-acid biosynthesis</keyword>
<keyword id="KW-0055">Arginine biosynthesis</keyword>
<keyword id="KW-0963">Cytoplasm</keyword>
<keyword id="KW-0521">NADP</keyword>
<keyword id="KW-0560">Oxidoreductase</keyword>
<proteinExistence type="inferred from homology"/>
<sequence length="345" mass="38536">MKVAIIGATGYGGIELIRLLEQHPYFSIASLHSFSQVGEFITNVYPHFRNVLVHTLQEIDAEKIEKEAEIVFLATPAGVSAELTPKLLAVGLKVIDLSGDFRMIDPSSYELWYKRPAAQEELLRKAVYGLSEWKRPEIQNANLIANPGCFATAALLAVAPLVRSGIIEEASIIIDAKSGVSGAGKTPTTMTHFPELYDNLHIYKVNQHQHVPEIEQMLTEWNRETKPITFSTHLIPISRGIMITLYAKVKEEMKIEQLQKLYEETYEYSAFVRVRSQGEFPSPKEVRGSNYCDIGIAYDERTERVTVVSVIDNMMKGAAGQAVQNANLLAGLEETTGLQHMPLYP</sequence>
<accession>A9VG72</accession>
<dbReference type="EC" id="1.2.1.38" evidence="1"/>
<dbReference type="EMBL" id="CP000903">
    <property type="protein sequence ID" value="ABY45132.1"/>
    <property type="molecule type" value="Genomic_DNA"/>
</dbReference>
<dbReference type="RefSeq" id="WP_012261679.1">
    <property type="nucleotide sequence ID" value="NC_010184.1"/>
</dbReference>
<dbReference type="SMR" id="A9VG72"/>
<dbReference type="KEGG" id="bwe:BcerKBAB4_3965"/>
<dbReference type="eggNOG" id="COG0002">
    <property type="taxonomic scope" value="Bacteria"/>
</dbReference>
<dbReference type="HOGENOM" id="CLU_006384_0_1_9"/>
<dbReference type="UniPathway" id="UPA00068">
    <property type="reaction ID" value="UER00108"/>
</dbReference>
<dbReference type="Proteomes" id="UP000002154">
    <property type="component" value="Chromosome"/>
</dbReference>
<dbReference type="GO" id="GO:0005737">
    <property type="term" value="C:cytoplasm"/>
    <property type="evidence" value="ECO:0007669"/>
    <property type="project" value="UniProtKB-SubCell"/>
</dbReference>
<dbReference type="GO" id="GO:0003942">
    <property type="term" value="F:N-acetyl-gamma-glutamyl-phosphate reductase activity"/>
    <property type="evidence" value="ECO:0007669"/>
    <property type="project" value="UniProtKB-UniRule"/>
</dbReference>
<dbReference type="GO" id="GO:0051287">
    <property type="term" value="F:NAD binding"/>
    <property type="evidence" value="ECO:0007669"/>
    <property type="project" value="InterPro"/>
</dbReference>
<dbReference type="GO" id="GO:0070401">
    <property type="term" value="F:NADP+ binding"/>
    <property type="evidence" value="ECO:0007669"/>
    <property type="project" value="InterPro"/>
</dbReference>
<dbReference type="GO" id="GO:0006526">
    <property type="term" value="P:L-arginine biosynthetic process"/>
    <property type="evidence" value="ECO:0007669"/>
    <property type="project" value="UniProtKB-UniRule"/>
</dbReference>
<dbReference type="CDD" id="cd23934">
    <property type="entry name" value="AGPR_1_C"/>
    <property type="match status" value="1"/>
</dbReference>
<dbReference type="CDD" id="cd17895">
    <property type="entry name" value="AGPR_1_N"/>
    <property type="match status" value="1"/>
</dbReference>
<dbReference type="FunFam" id="3.30.360.10:FF:000014">
    <property type="entry name" value="N-acetyl-gamma-glutamyl-phosphate reductase"/>
    <property type="match status" value="1"/>
</dbReference>
<dbReference type="Gene3D" id="3.30.360.10">
    <property type="entry name" value="Dihydrodipicolinate Reductase, domain 2"/>
    <property type="match status" value="1"/>
</dbReference>
<dbReference type="Gene3D" id="3.40.50.720">
    <property type="entry name" value="NAD(P)-binding Rossmann-like Domain"/>
    <property type="match status" value="1"/>
</dbReference>
<dbReference type="HAMAP" id="MF_00150">
    <property type="entry name" value="ArgC_type1"/>
    <property type="match status" value="1"/>
</dbReference>
<dbReference type="InterPro" id="IPR023013">
    <property type="entry name" value="AGPR_AS"/>
</dbReference>
<dbReference type="InterPro" id="IPR000706">
    <property type="entry name" value="AGPR_type-1"/>
</dbReference>
<dbReference type="InterPro" id="IPR036291">
    <property type="entry name" value="NAD(P)-bd_dom_sf"/>
</dbReference>
<dbReference type="InterPro" id="IPR050085">
    <property type="entry name" value="NAGSA_dehydrogenase"/>
</dbReference>
<dbReference type="InterPro" id="IPR000534">
    <property type="entry name" value="Semialdehyde_DH_NAD-bd"/>
</dbReference>
<dbReference type="NCBIfam" id="TIGR01850">
    <property type="entry name" value="argC"/>
    <property type="match status" value="1"/>
</dbReference>
<dbReference type="PANTHER" id="PTHR32338:SF10">
    <property type="entry name" value="N-ACETYL-GAMMA-GLUTAMYL-PHOSPHATE REDUCTASE, CHLOROPLASTIC-RELATED"/>
    <property type="match status" value="1"/>
</dbReference>
<dbReference type="PANTHER" id="PTHR32338">
    <property type="entry name" value="N-ACETYL-GAMMA-GLUTAMYL-PHOSPHATE REDUCTASE, CHLOROPLASTIC-RELATED-RELATED"/>
    <property type="match status" value="1"/>
</dbReference>
<dbReference type="Pfam" id="PF01118">
    <property type="entry name" value="Semialdhyde_dh"/>
    <property type="match status" value="1"/>
</dbReference>
<dbReference type="Pfam" id="PF22698">
    <property type="entry name" value="Semialdhyde_dhC_1"/>
    <property type="match status" value="1"/>
</dbReference>
<dbReference type="PIRSF" id="PIRSF000148">
    <property type="entry name" value="ASA_dh"/>
    <property type="match status" value="1"/>
</dbReference>
<dbReference type="SMART" id="SM00859">
    <property type="entry name" value="Semialdhyde_dh"/>
    <property type="match status" value="1"/>
</dbReference>
<dbReference type="SUPFAM" id="SSF55347">
    <property type="entry name" value="Glyceraldehyde-3-phosphate dehydrogenase-like, C-terminal domain"/>
    <property type="match status" value="1"/>
</dbReference>
<dbReference type="SUPFAM" id="SSF51735">
    <property type="entry name" value="NAD(P)-binding Rossmann-fold domains"/>
    <property type="match status" value="1"/>
</dbReference>
<dbReference type="PROSITE" id="PS01224">
    <property type="entry name" value="ARGC"/>
    <property type="match status" value="1"/>
</dbReference>
<organism>
    <name type="scientific">Bacillus mycoides (strain KBAB4)</name>
    <name type="common">Bacillus weihenstephanensis</name>
    <dbReference type="NCBI Taxonomy" id="315730"/>
    <lineage>
        <taxon>Bacteria</taxon>
        <taxon>Bacillati</taxon>
        <taxon>Bacillota</taxon>
        <taxon>Bacilli</taxon>
        <taxon>Bacillales</taxon>
        <taxon>Bacillaceae</taxon>
        <taxon>Bacillus</taxon>
        <taxon>Bacillus cereus group</taxon>
    </lineage>
</organism>
<name>ARGC_BACMK</name>
<reference key="1">
    <citation type="journal article" date="2008" name="Chem. Biol. Interact.">
        <title>Extending the Bacillus cereus group genomics to putative food-borne pathogens of different toxicity.</title>
        <authorList>
            <person name="Lapidus A."/>
            <person name="Goltsman E."/>
            <person name="Auger S."/>
            <person name="Galleron N."/>
            <person name="Segurens B."/>
            <person name="Dossat C."/>
            <person name="Land M.L."/>
            <person name="Broussolle V."/>
            <person name="Brillard J."/>
            <person name="Guinebretiere M.-H."/>
            <person name="Sanchis V."/>
            <person name="Nguen-the C."/>
            <person name="Lereclus D."/>
            <person name="Richardson P."/>
            <person name="Wincker P."/>
            <person name="Weissenbach J."/>
            <person name="Ehrlich S.D."/>
            <person name="Sorokin A."/>
        </authorList>
    </citation>
    <scope>NUCLEOTIDE SEQUENCE [LARGE SCALE GENOMIC DNA]</scope>
    <source>
        <strain>KBAB4</strain>
    </source>
</reference>